<gene>
    <name evidence="1" type="primary">cbpM</name>
    <name type="ordered locus">SCH_1062</name>
</gene>
<accession>Q57QP3</accession>
<proteinExistence type="inferred from homology"/>
<organism>
    <name type="scientific">Salmonella choleraesuis (strain SC-B67)</name>
    <dbReference type="NCBI Taxonomy" id="321314"/>
    <lineage>
        <taxon>Bacteria</taxon>
        <taxon>Pseudomonadati</taxon>
        <taxon>Pseudomonadota</taxon>
        <taxon>Gammaproteobacteria</taxon>
        <taxon>Enterobacterales</taxon>
        <taxon>Enterobacteriaceae</taxon>
        <taxon>Salmonella</taxon>
    </lineage>
</organism>
<sequence>MANITVTFTITEFCLHTGVTEEELNEIVGLGVIEPYEDDNADWQFDDRAASVVQRALRLREELALDWPGIAVALTLLEENSRLREENRLLLQRLSRFISHP</sequence>
<comment type="function">
    <text evidence="1">Interacts with CbpA and inhibits both the DnaJ-like co-chaperone activity and the DNA binding activity of CbpA. Together with CbpA, modulates the activity of the DnaK chaperone system. Does not inhibit the co-chaperone activity of DnaJ.</text>
</comment>
<comment type="similarity">
    <text evidence="1">Belongs to the CbpM family.</text>
</comment>
<evidence type="ECO:0000255" key="1">
    <source>
        <dbReference type="HAMAP-Rule" id="MF_01155"/>
    </source>
</evidence>
<protein>
    <recommendedName>
        <fullName evidence="1">Chaperone modulatory protein CbpM</fullName>
    </recommendedName>
</protein>
<dbReference type="EMBL" id="AE017220">
    <property type="protein sequence ID" value="AAX64968.1"/>
    <property type="molecule type" value="Genomic_DNA"/>
</dbReference>
<dbReference type="RefSeq" id="WP_001284251.1">
    <property type="nucleotide sequence ID" value="NC_006905.1"/>
</dbReference>
<dbReference type="SMR" id="Q57QP3"/>
<dbReference type="KEGG" id="sec:SCH_1062"/>
<dbReference type="HOGENOM" id="CLU_144710_3_1_6"/>
<dbReference type="Proteomes" id="UP000000538">
    <property type="component" value="Chromosome"/>
</dbReference>
<dbReference type="Gene3D" id="1.10.1660.10">
    <property type="match status" value="1"/>
</dbReference>
<dbReference type="HAMAP" id="MF_01155">
    <property type="entry name" value="CbpM"/>
    <property type="match status" value="1"/>
</dbReference>
<dbReference type="InterPro" id="IPR022835">
    <property type="entry name" value="CbpM"/>
</dbReference>
<dbReference type="NCBIfam" id="NF007617">
    <property type="entry name" value="PRK10265.1"/>
    <property type="match status" value="1"/>
</dbReference>
<dbReference type="Pfam" id="PF13591">
    <property type="entry name" value="MerR_2"/>
    <property type="match status" value="1"/>
</dbReference>
<name>CBPM_SALCH</name>
<reference key="1">
    <citation type="journal article" date="2005" name="Nucleic Acids Res.">
        <title>The genome sequence of Salmonella enterica serovar Choleraesuis, a highly invasive and resistant zoonotic pathogen.</title>
        <authorList>
            <person name="Chiu C.-H."/>
            <person name="Tang P."/>
            <person name="Chu C."/>
            <person name="Hu S."/>
            <person name="Bao Q."/>
            <person name="Yu J."/>
            <person name="Chou Y.-Y."/>
            <person name="Wang H.-S."/>
            <person name="Lee Y.-S."/>
        </authorList>
    </citation>
    <scope>NUCLEOTIDE SEQUENCE [LARGE SCALE GENOMIC DNA]</scope>
    <source>
        <strain>SC-B67</strain>
    </source>
</reference>
<feature type="chain" id="PRO_0000286892" description="Chaperone modulatory protein CbpM">
    <location>
        <begin position="1"/>
        <end position="101"/>
    </location>
</feature>